<keyword id="KW-0046">Antibiotic resistance</keyword>
<keyword id="KW-0997">Cell inner membrane</keyword>
<keyword id="KW-1003">Cell membrane</keyword>
<keyword id="KW-0472">Membrane</keyword>
<keyword id="KW-0812">Transmembrane</keyword>
<keyword id="KW-1133">Transmembrane helix</keyword>
<keyword id="KW-0813">Transport</keyword>
<accession>B7NL82</accession>
<name>MDTG_ECO7I</name>
<protein>
    <recommendedName>
        <fullName evidence="1">Multidrug resistance protein MdtG</fullName>
    </recommendedName>
</protein>
<feature type="chain" id="PRO_1000200784" description="Multidrug resistance protein MdtG">
    <location>
        <begin position="1"/>
        <end position="408"/>
    </location>
</feature>
<feature type="transmembrane region" description="Helical" evidence="1">
    <location>
        <begin position="16"/>
        <end position="36"/>
    </location>
</feature>
<feature type="transmembrane region" description="Helical" evidence="1">
    <location>
        <begin position="58"/>
        <end position="78"/>
    </location>
</feature>
<feature type="transmembrane region" description="Helical" evidence="1">
    <location>
        <begin position="92"/>
        <end position="112"/>
    </location>
</feature>
<feature type="transmembrane region" description="Helical" evidence="1">
    <location>
        <begin position="115"/>
        <end position="135"/>
    </location>
</feature>
<feature type="transmembrane region" description="Helical" evidence="1">
    <location>
        <begin position="146"/>
        <end position="166"/>
    </location>
</feature>
<feature type="transmembrane region" description="Helical" evidence="1">
    <location>
        <begin position="173"/>
        <end position="193"/>
    </location>
</feature>
<feature type="transmembrane region" description="Helical" evidence="1">
    <location>
        <begin position="224"/>
        <end position="244"/>
    </location>
</feature>
<feature type="transmembrane region" description="Helical" evidence="1">
    <location>
        <begin position="256"/>
        <end position="276"/>
    </location>
</feature>
<feature type="transmembrane region" description="Helical" evidence="1">
    <location>
        <begin position="290"/>
        <end position="310"/>
    </location>
</feature>
<feature type="transmembrane region" description="Helical" evidence="1">
    <location>
        <begin position="319"/>
        <end position="339"/>
    </location>
</feature>
<feature type="transmembrane region" description="Helical" evidence="1">
    <location>
        <begin position="378"/>
        <end position="398"/>
    </location>
</feature>
<organism>
    <name type="scientific">Escherichia coli O7:K1 (strain IAI39 / ExPEC)</name>
    <dbReference type="NCBI Taxonomy" id="585057"/>
    <lineage>
        <taxon>Bacteria</taxon>
        <taxon>Pseudomonadati</taxon>
        <taxon>Pseudomonadota</taxon>
        <taxon>Gammaproteobacteria</taxon>
        <taxon>Enterobacterales</taxon>
        <taxon>Enterobacteriaceae</taxon>
        <taxon>Escherichia</taxon>
    </lineage>
</organism>
<proteinExistence type="inferred from homology"/>
<comment type="function">
    <text evidence="1">Confers resistance to fosfomycin and deoxycholate.</text>
</comment>
<comment type="subcellular location">
    <subcellularLocation>
        <location evidence="1">Cell inner membrane</location>
        <topology evidence="1">Multi-pass membrane protein</topology>
    </subcellularLocation>
</comment>
<comment type="similarity">
    <text evidence="1">Belongs to the major facilitator superfamily. DHA1 family. MdtG (TC 2.A.1.2.20) subfamily.</text>
</comment>
<sequence length="408" mass="43863">MSPCENDPPINWKRNLIVAWLGCFLTGAAFSLVMPFLPLYVEQLGVTGHSALNMWSGIVFSITFLFSAIASPFWGGLADRKGRKLMLLRSALGMGIVMVLMGLAQNIWQFLILRALLGLLGGFVPNANALIATQVPRNKSGWALGTLSTGGVSGALLGPMAGGLLADSYGLRPVFFITASVLILCFFVTLFCIREKFQPVSKKEMLHMREVVTSLKNPKLVLSLFVTTLIIQVATGSIAPILTLYVRELAGNVSNVAFISGMIASVPGVAALLSAPRLGKLGDRIGPEKILITALIFSVLLLIPMSYVQTPLQLGILRFLLGAADGALLPAVQTLLVYNSSNQIAGRIFSYNQSFRDIGNVTGPLMGAAISANYGFRAVFLVTAGVVLFNAVYSWNSLRRRRIPQVSN</sequence>
<reference key="1">
    <citation type="journal article" date="2009" name="PLoS Genet.">
        <title>Organised genome dynamics in the Escherichia coli species results in highly diverse adaptive paths.</title>
        <authorList>
            <person name="Touchon M."/>
            <person name="Hoede C."/>
            <person name="Tenaillon O."/>
            <person name="Barbe V."/>
            <person name="Baeriswyl S."/>
            <person name="Bidet P."/>
            <person name="Bingen E."/>
            <person name="Bonacorsi S."/>
            <person name="Bouchier C."/>
            <person name="Bouvet O."/>
            <person name="Calteau A."/>
            <person name="Chiapello H."/>
            <person name="Clermont O."/>
            <person name="Cruveiller S."/>
            <person name="Danchin A."/>
            <person name="Diard M."/>
            <person name="Dossat C."/>
            <person name="Karoui M.E."/>
            <person name="Frapy E."/>
            <person name="Garry L."/>
            <person name="Ghigo J.M."/>
            <person name="Gilles A.M."/>
            <person name="Johnson J."/>
            <person name="Le Bouguenec C."/>
            <person name="Lescat M."/>
            <person name="Mangenot S."/>
            <person name="Martinez-Jehanne V."/>
            <person name="Matic I."/>
            <person name="Nassif X."/>
            <person name="Oztas S."/>
            <person name="Petit M.A."/>
            <person name="Pichon C."/>
            <person name="Rouy Z."/>
            <person name="Ruf C.S."/>
            <person name="Schneider D."/>
            <person name="Tourret J."/>
            <person name="Vacherie B."/>
            <person name="Vallenet D."/>
            <person name="Medigue C."/>
            <person name="Rocha E.P.C."/>
            <person name="Denamur E."/>
        </authorList>
    </citation>
    <scope>NUCLEOTIDE SEQUENCE [LARGE SCALE GENOMIC DNA]</scope>
    <source>
        <strain>IAI39 / ExPEC</strain>
    </source>
</reference>
<gene>
    <name evidence="1" type="primary">mdtG</name>
    <name type="ordered locus">ECIAI39_2111</name>
</gene>
<dbReference type="EMBL" id="CU928164">
    <property type="protein sequence ID" value="CAR18238.1"/>
    <property type="molecule type" value="Genomic_DNA"/>
</dbReference>
<dbReference type="RefSeq" id="WP_000074152.1">
    <property type="nucleotide sequence ID" value="NC_011750.1"/>
</dbReference>
<dbReference type="RefSeq" id="YP_002408074.1">
    <property type="nucleotide sequence ID" value="NC_011750.1"/>
</dbReference>
<dbReference type="SMR" id="B7NL82"/>
<dbReference type="STRING" id="585057.ECIAI39_2111"/>
<dbReference type="KEGG" id="ect:ECIAI39_2111"/>
<dbReference type="PATRIC" id="fig|585057.6.peg.2193"/>
<dbReference type="HOGENOM" id="CLU_001265_57_3_6"/>
<dbReference type="Proteomes" id="UP000000749">
    <property type="component" value="Chromosome"/>
</dbReference>
<dbReference type="GO" id="GO:0005886">
    <property type="term" value="C:plasma membrane"/>
    <property type="evidence" value="ECO:0007669"/>
    <property type="project" value="UniProtKB-SubCell"/>
</dbReference>
<dbReference type="GO" id="GO:0022857">
    <property type="term" value="F:transmembrane transporter activity"/>
    <property type="evidence" value="ECO:0007669"/>
    <property type="project" value="UniProtKB-UniRule"/>
</dbReference>
<dbReference type="GO" id="GO:0046677">
    <property type="term" value="P:response to antibiotic"/>
    <property type="evidence" value="ECO:0007669"/>
    <property type="project" value="UniProtKB-KW"/>
</dbReference>
<dbReference type="CDD" id="cd17391">
    <property type="entry name" value="MFS_MdtG_MDR_like"/>
    <property type="match status" value="1"/>
</dbReference>
<dbReference type="FunFam" id="1.20.1250.20:FF:000020">
    <property type="entry name" value="Multidrug resistance protein MdtG"/>
    <property type="match status" value="1"/>
</dbReference>
<dbReference type="FunFam" id="1.20.1250.20:FF:000022">
    <property type="entry name" value="Multidrug resistance protein MdtG"/>
    <property type="match status" value="1"/>
</dbReference>
<dbReference type="Gene3D" id="1.20.1250.20">
    <property type="entry name" value="MFS general substrate transporter like domains"/>
    <property type="match status" value="2"/>
</dbReference>
<dbReference type="HAMAP" id="MF_01528">
    <property type="entry name" value="MFS_MdtG"/>
    <property type="match status" value="1"/>
</dbReference>
<dbReference type="InterPro" id="IPR011701">
    <property type="entry name" value="MFS"/>
</dbReference>
<dbReference type="InterPro" id="IPR020846">
    <property type="entry name" value="MFS_dom"/>
</dbReference>
<dbReference type="InterPro" id="IPR050497">
    <property type="entry name" value="MFS_MdtG_subfamily"/>
</dbReference>
<dbReference type="InterPro" id="IPR036259">
    <property type="entry name" value="MFS_trans_sf"/>
</dbReference>
<dbReference type="InterPro" id="IPR023692">
    <property type="entry name" value="Mutidrug-R_MdtG"/>
</dbReference>
<dbReference type="InterPro" id="IPR001958">
    <property type="entry name" value="Tet-R_TetA/multi-R_MdtG-like"/>
</dbReference>
<dbReference type="NCBIfam" id="NF007372">
    <property type="entry name" value="PRK09874.1"/>
    <property type="match status" value="1"/>
</dbReference>
<dbReference type="PANTHER" id="PTHR43414">
    <property type="entry name" value="MULTIDRUG RESISTANCE PROTEIN MDTG"/>
    <property type="match status" value="1"/>
</dbReference>
<dbReference type="PANTHER" id="PTHR43414:SF6">
    <property type="entry name" value="MULTIDRUG RESISTANCE PROTEIN MDTG"/>
    <property type="match status" value="1"/>
</dbReference>
<dbReference type="Pfam" id="PF07690">
    <property type="entry name" value="MFS_1"/>
    <property type="match status" value="1"/>
</dbReference>
<dbReference type="PRINTS" id="PR01035">
    <property type="entry name" value="TCRTETA"/>
</dbReference>
<dbReference type="SUPFAM" id="SSF103473">
    <property type="entry name" value="MFS general substrate transporter"/>
    <property type="match status" value="1"/>
</dbReference>
<dbReference type="PROSITE" id="PS50850">
    <property type="entry name" value="MFS"/>
    <property type="match status" value="1"/>
</dbReference>
<evidence type="ECO:0000255" key="1">
    <source>
        <dbReference type="HAMAP-Rule" id="MF_01528"/>
    </source>
</evidence>